<reference key="1">
    <citation type="submission" date="2007-03" db="EMBL/GenBank/DDBJ databases">
        <authorList>
            <person name="Nishikawa R."/>
            <person name="Carr J."/>
            <person name="Smith V."/>
            <person name="West W."/>
            <person name="Haluska D."/>
            <person name="Marass P."/>
            <person name="Marquis H."/>
            <person name="Stanton B.A."/>
            <person name="Sato J.D."/>
        </authorList>
    </citation>
    <scope>NUCLEOTIDE SEQUENCE [MRNA]</scope>
</reference>
<reference key="2">
    <citation type="submission" date="2003-05" db="EMBL/GenBank/DDBJ databases">
        <authorList>
            <consortium name="NIH - Zebrafish Gene Collection (ZGC) project"/>
        </authorList>
    </citation>
    <scope>NUCLEOTIDE SEQUENCE [LARGE SCALE MRNA]</scope>
    <source>
        <tissue>Kidney</tissue>
    </source>
</reference>
<dbReference type="EC" id="2.7.11.1"/>
<dbReference type="EMBL" id="EF512629">
    <property type="protein sequence ID" value="ABO88209.1"/>
    <property type="molecule type" value="mRNA"/>
</dbReference>
<dbReference type="EMBL" id="BC052134">
    <property type="protein sequence ID" value="AAH52134.1"/>
    <property type="molecule type" value="mRNA"/>
</dbReference>
<dbReference type="EMBL" id="BC067618">
    <property type="protein sequence ID" value="AAH67618.1"/>
    <property type="molecule type" value="mRNA"/>
</dbReference>
<dbReference type="RefSeq" id="NP_954682.1">
    <property type="nucleotide sequence ID" value="NM_199212.1"/>
</dbReference>
<dbReference type="SMR" id="Q7ZTW4"/>
<dbReference type="FunCoup" id="Q7ZTW4">
    <property type="interactions" value="264"/>
</dbReference>
<dbReference type="STRING" id="7955.ENSDARP00000031762"/>
<dbReference type="PaxDb" id="7955-ENSDARP00000031762"/>
<dbReference type="Ensembl" id="ENSDART00000035031">
    <property type="protein sequence ID" value="ENSDARP00000031762"/>
    <property type="gene ID" value="ENSDARG00000025522"/>
</dbReference>
<dbReference type="Ensembl" id="ENSDART00000193557">
    <property type="protein sequence ID" value="ENSDARP00000155076"/>
    <property type="gene ID" value="ENSDARG00000115600"/>
</dbReference>
<dbReference type="GeneID" id="324140"/>
<dbReference type="KEGG" id="dre:324140"/>
<dbReference type="AGR" id="ZFIN:ZDB-GENE-030131-2860"/>
<dbReference type="CTD" id="6446"/>
<dbReference type="ZFIN" id="ZDB-GENE-030131-2860">
    <property type="gene designation" value="sgk1"/>
</dbReference>
<dbReference type="eggNOG" id="KOG0598">
    <property type="taxonomic scope" value="Eukaryota"/>
</dbReference>
<dbReference type="HOGENOM" id="CLU_000288_63_5_1"/>
<dbReference type="InParanoid" id="Q7ZTW4"/>
<dbReference type="OMA" id="CVIYDMM"/>
<dbReference type="OrthoDB" id="63267at2759"/>
<dbReference type="PhylomeDB" id="Q7ZTW4"/>
<dbReference type="TreeFam" id="TF320906"/>
<dbReference type="Reactome" id="R-DRE-1257604">
    <property type="pathway name" value="PIP3 activates AKT signaling"/>
</dbReference>
<dbReference type="Reactome" id="R-DRE-6804757">
    <property type="pathway name" value="Regulation of TP53 Degradation"/>
</dbReference>
<dbReference type="Reactome" id="R-DRE-9031628">
    <property type="pathway name" value="NGF-stimulated transcription"/>
</dbReference>
<dbReference type="PRO" id="PR:Q7ZTW4"/>
<dbReference type="Proteomes" id="UP000000437">
    <property type="component" value="Alternate scaffold 23"/>
</dbReference>
<dbReference type="Proteomes" id="UP000000437">
    <property type="component" value="Chromosome 23"/>
</dbReference>
<dbReference type="Bgee" id="ENSDARG00000025522">
    <property type="expression patterns" value="Expressed in granulocyte and 26 other cell types or tissues"/>
</dbReference>
<dbReference type="ExpressionAtlas" id="Q7ZTW4">
    <property type="expression patterns" value="baseline and differential"/>
</dbReference>
<dbReference type="GO" id="GO:0005737">
    <property type="term" value="C:cytoplasm"/>
    <property type="evidence" value="ECO:0000318"/>
    <property type="project" value="GO_Central"/>
</dbReference>
<dbReference type="GO" id="GO:0005783">
    <property type="term" value="C:endoplasmic reticulum"/>
    <property type="evidence" value="ECO:0007669"/>
    <property type="project" value="UniProtKB-SubCell"/>
</dbReference>
<dbReference type="GO" id="GO:0005634">
    <property type="term" value="C:nucleus"/>
    <property type="evidence" value="ECO:0000318"/>
    <property type="project" value="GO_Central"/>
</dbReference>
<dbReference type="GO" id="GO:0005524">
    <property type="term" value="F:ATP binding"/>
    <property type="evidence" value="ECO:0007669"/>
    <property type="project" value="UniProtKB-KW"/>
</dbReference>
<dbReference type="GO" id="GO:0015459">
    <property type="term" value="F:potassium channel regulator activity"/>
    <property type="evidence" value="ECO:0000318"/>
    <property type="project" value="GO_Central"/>
</dbReference>
<dbReference type="GO" id="GO:0106310">
    <property type="term" value="F:protein serine kinase activity"/>
    <property type="evidence" value="ECO:0007669"/>
    <property type="project" value="RHEA"/>
</dbReference>
<dbReference type="GO" id="GO:0004674">
    <property type="term" value="F:protein serine/threonine kinase activity"/>
    <property type="evidence" value="ECO:0000318"/>
    <property type="project" value="GO_Central"/>
</dbReference>
<dbReference type="GO" id="GO:0006915">
    <property type="term" value="P:apoptotic process"/>
    <property type="evidence" value="ECO:0007669"/>
    <property type="project" value="UniProtKB-KW"/>
</dbReference>
<dbReference type="GO" id="GO:0006954">
    <property type="term" value="P:inflammatory response"/>
    <property type="evidence" value="ECO:0000315"/>
    <property type="project" value="ZFIN"/>
</dbReference>
<dbReference type="GO" id="GO:0035556">
    <property type="term" value="P:intracellular signal transduction"/>
    <property type="evidence" value="ECO:0000318"/>
    <property type="project" value="GO_Central"/>
</dbReference>
<dbReference type="GO" id="GO:0048812">
    <property type="term" value="P:neuron projection morphogenesis"/>
    <property type="evidence" value="ECO:0000318"/>
    <property type="project" value="GO_Central"/>
</dbReference>
<dbReference type="CDD" id="cd05602">
    <property type="entry name" value="STKc_SGK1"/>
    <property type="match status" value="1"/>
</dbReference>
<dbReference type="FunFam" id="1.10.510.10:FF:000065">
    <property type="entry name" value="Non-specific serine/threonine protein kinase"/>
    <property type="match status" value="1"/>
</dbReference>
<dbReference type="FunFam" id="3.30.200.20:FF:000030">
    <property type="entry name" value="Non-specific serine/threonine protein kinase"/>
    <property type="match status" value="1"/>
</dbReference>
<dbReference type="Gene3D" id="3.30.200.20">
    <property type="entry name" value="Phosphorylase Kinase, domain 1"/>
    <property type="match status" value="1"/>
</dbReference>
<dbReference type="Gene3D" id="1.10.510.10">
    <property type="entry name" value="Transferase(Phosphotransferase) domain 1"/>
    <property type="match status" value="1"/>
</dbReference>
<dbReference type="InterPro" id="IPR000961">
    <property type="entry name" value="AGC-kinase_C"/>
</dbReference>
<dbReference type="InterPro" id="IPR011009">
    <property type="entry name" value="Kinase-like_dom_sf"/>
</dbReference>
<dbReference type="InterPro" id="IPR017892">
    <property type="entry name" value="Pkinase_C"/>
</dbReference>
<dbReference type="InterPro" id="IPR000719">
    <property type="entry name" value="Prot_kinase_dom"/>
</dbReference>
<dbReference type="InterPro" id="IPR017441">
    <property type="entry name" value="Protein_kinase_ATP_BS"/>
</dbReference>
<dbReference type="InterPro" id="IPR008271">
    <property type="entry name" value="Ser/Thr_kinase_AS"/>
</dbReference>
<dbReference type="PANTHER" id="PTHR24351">
    <property type="entry name" value="RIBOSOMAL PROTEIN S6 KINASE"/>
    <property type="match status" value="1"/>
</dbReference>
<dbReference type="Pfam" id="PF00069">
    <property type="entry name" value="Pkinase"/>
    <property type="match status" value="1"/>
</dbReference>
<dbReference type="Pfam" id="PF00433">
    <property type="entry name" value="Pkinase_C"/>
    <property type="match status" value="1"/>
</dbReference>
<dbReference type="SMART" id="SM00133">
    <property type="entry name" value="S_TK_X"/>
    <property type="match status" value="1"/>
</dbReference>
<dbReference type="SMART" id="SM00220">
    <property type="entry name" value="S_TKc"/>
    <property type="match status" value="1"/>
</dbReference>
<dbReference type="SUPFAM" id="SSF56112">
    <property type="entry name" value="Protein kinase-like (PK-like)"/>
    <property type="match status" value="1"/>
</dbReference>
<dbReference type="PROSITE" id="PS51285">
    <property type="entry name" value="AGC_KINASE_CTER"/>
    <property type="match status" value="1"/>
</dbReference>
<dbReference type="PROSITE" id="PS00107">
    <property type="entry name" value="PROTEIN_KINASE_ATP"/>
    <property type="match status" value="1"/>
</dbReference>
<dbReference type="PROSITE" id="PS50011">
    <property type="entry name" value="PROTEIN_KINASE_DOM"/>
    <property type="match status" value="1"/>
</dbReference>
<dbReference type="PROSITE" id="PS00108">
    <property type="entry name" value="PROTEIN_KINASE_ST"/>
    <property type="match status" value="1"/>
</dbReference>
<proteinExistence type="evidence at transcript level"/>
<evidence type="ECO:0000250" key="1"/>
<evidence type="ECO:0000255" key="2">
    <source>
        <dbReference type="PROSITE-ProRule" id="PRU00159"/>
    </source>
</evidence>
<evidence type="ECO:0000255" key="3">
    <source>
        <dbReference type="PROSITE-ProRule" id="PRU00618"/>
    </source>
</evidence>
<evidence type="ECO:0000255" key="4">
    <source>
        <dbReference type="PROSITE-ProRule" id="PRU10027"/>
    </source>
</evidence>
<evidence type="ECO:0000256" key="5">
    <source>
        <dbReference type="SAM" id="MobiDB-lite"/>
    </source>
</evidence>
<evidence type="ECO:0000305" key="6"/>
<feature type="chain" id="PRO_0000380131" description="Serine/threonine-protein kinase Sgk1">
    <location>
        <begin position="1"/>
        <end position="433"/>
    </location>
</feature>
<feature type="domain" description="Protein kinase" evidence="2">
    <location>
        <begin position="100"/>
        <end position="357"/>
    </location>
</feature>
<feature type="domain" description="AGC-kinase C-terminal" evidence="3">
    <location>
        <begin position="358"/>
        <end position="433"/>
    </location>
</feature>
<feature type="region of interest" description="Disordered" evidence="5">
    <location>
        <begin position="66"/>
        <end position="92"/>
    </location>
</feature>
<feature type="compositionally biased region" description="Polar residues" evidence="5">
    <location>
        <begin position="83"/>
        <end position="92"/>
    </location>
</feature>
<feature type="active site" description="Proton acceptor" evidence="2 4">
    <location>
        <position position="224"/>
    </location>
</feature>
<feature type="binding site" evidence="2">
    <location>
        <begin position="106"/>
        <end position="114"/>
    </location>
    <ligand>
        <name>ATP</name>
        <dbReference type="ChEBI" id="CHEBI:30616"/>
    </ligand>
</feature>
<feature type="binding site" evidence="2">
    <location>
        <position position="129"/>
    </location>
    <ligand>
        <name>ATP</name>
        <dbReference type="ChEBI" id="CHEBI:30616"/>
    </ligand>
</feature>
<sequence length="433" mass="48983">MTIQTETSVSAPDLTYSKTRGLVANLSAFMKQRKMGLNDFIQKLSANSYACKHPEVQSILNLTPPQDVELMNSNPSPPPSPSQQINLGPSSNPTAKPSDFDFLKVIGKGSFGKVLLARHRSDEKFYAVKVLQKKAILKKKEEKHIMSERNVLLKNVKHPFLVGLHYSFQTTDKLYFVLDYINGGELFYHLQRERCFLEPRARFYAAEIASALGYLHSLNIVYRDLKPENILLDSQGHIILTDFGLCKENIEPNGTTSTFCGTPEYLAPEVLHKQPYDRTVDWWCLGAVLYEMLYGLPPFYSRNTAEMYDNILNKPLQLKPNISNAARHLLEGLLQKDRTKRLGFTDDFTEIKNHMFFSPINWDDLNAKKLTPPFNPNVTGPNDLRHFDPEFTDEPVPNSIGCSPDSALVTSSITEATEAFLGFSYAPAMDSYL</sequence>
<name>SGK1_DANRE</name>
<comment type="function">
    <text evidence="1">Protein kinase that may play an important role in cellular stress response. May be involved in the regulation of processes such as cell survival, neuronal excitability and renal sodium excretion (By similarity).</text>
</comment>
<comment type="catalytic activity">
    <reaction>
        <text>L-seryl-[protein] + ATP = O-phospho-L-seryl-[protein] + ADP + H(+)</text>
        <dbReference type="Rhea" id="RHEA:17989"/>
        <dbReference type="Rhea" id="RHEA-COMP:9863"/>
        <dbReference type="Rhea" id="RHEA-COMP:11604"/>
        <dbReference type="ChEBI" id="CHEBI:15378"/>
        <dbReference type="ChEBI" id="CHEBI:29999"/>
        <dbReference type="ChEBI" id="CHEBI:30616"/>
        <dbReference type="ChEBI" id="CHEBI:83421"/>
        <dbReference type="ChEBI" id="CHEBI:456216"/>
        <dbReference type="EC" id="2.7.11.1"/>
    </reaction>
</comment>
<comment type="catalytic activity">
    <reaction>
        <text>L-threonyl-[protein] + ATP = O-phospho-L-threonyl-[protein] + ADP + H(+)</text>
        <dbReference type="Rhea" id="RHEA:46608"/>
        <dbReference type="Rhea" id="RHEA-COMP:11060"/>
        <dbReference type="Rhea" id="RHEA-COMP:11605"/>
        <dbReference type="ChEBI" id="CHEBI:15378"/>
        <dbReference type="ChEBI" id="CHEBI:30013"/>
        <dbReference type="ChEBI" id="CHEBI:30616"/>
        <dbReference type="ChEBI" id="CHEBI:61977"/>
        <dbReference type="ChEBI" id="CHEBI:456216"/>
        <dbReference type="EC" id="2.7.11.1"/>
    </reaction>
</comment>
<comment type="subcellular location">
    <subcellularLocation>
        <location evidence="1">Cytoplasm</location>
    </subcellularLocation>
    <subcellularLocation>
        <location evidence="1">Nucleus</location>
    </subcellularLocation>
    <subcellularLocation>
        <location evidence="1">Endoplasmic reticulum</location>
    </subcellularLocation>
</comment>
<comment type="similarity">
    <text evidence="6">Belongs to the protein kinase superfamily. AGC Ser/Thr protein kinase family.</text>
</comment>
<organism>
    <name type="scientific">Danio rerio</name>
    <name type="common">Zebrafish</name>
    <name type="synonym">Brachydanio rerio</name>
    <dbReference type="NCBI Taxonomy" id="7955"/>
    <lineage>
        <taxon>Eukaryota</taxon>
        <taxon>Metazoa</taxon>
        <taxon>Chordata</taxon>
        <taxon>Craniata</taxon>
        <taxon>Vertebrata</taxon>
        <taxon>Euteleostomi</taxon>
        <taxon>Actinopterygii</taxon>
        <taxon>Neopterygii</taxon>
        <taxon>Teleostei</taxon>
        <taxon>Ostariophysi</taxon>
        <taxon>Cypriniformes</taxon>
        <taxon>Danionidae</taxon>
        <taxon>Danioninae</taxon>
        <taxon>Danio</taxon>
    </lineage>
</organism>
<gene>
    <name type="primary">sgk1</name>
    <name type="synonym">sgk</name>
    <name type="ORF">wu:fc20a09</name>
</gene>
<protein>
    <recommendedName>
        <fullName>Serine/threonine-protein kinase Sgk1</fullName>
        <ecNumber>2.7.11.1</ecNumber>
    </recommendedName>
    <alternativeName>
        <fullName>Serum/glucocorticoid-regulated kinase 1</fullName>
    </alternativeName>
</protein>
<accession>Q7ZTW4</accession>
<keyword id="KW-0053">Apoptosis</keyword>
<keyword id="KW-0067">ATP-binding</keyword>
<keyword id="KW-0963">Cytoplasm</keyword>
<keyword id="KW-0256">Endoplasmic reticulum</keyword>
<keyword id="KW-0418">Kinase</keyword>
<keyword id="KW-0547">Nucleotide-binding</keyword>
<keyword id="KW-0539">Nucleus</keyword>
<keyword id="KW-0597">Phosphoprotein</keyword>
<keyword id="KW-1185">Reference proteome</keyword>
<keyword id="KW-0723">Serine/threonine-protein kinase</keyword>
<keyword id="KW-0346">Stress response</keyword>
<keyword id="KW-0808">Transferase</keyword>